<accession>Q9YUD0</accession>
<feature type="chain" id="PRO_0000319856" description="Uncharacterized protein ORF7">
    <location>
        <begin position="1"/>
        <end position="86"/>
    </location>
</feature>
<sequence>MFNSVSLPLTIPALNKDSDSKYLFECLLAPSALTVFVVSGGPPGAPPPTQNTPSGLVGLSGLTALRALRQGVPPCGIGPSARRLAL</sequence>
<reference key="1">
    <citation type="journal article" date="1998" name="Virology">
        <title>Psittacine beak and feather disease virus nucleotide sequence analysis and its relationship to porcine circovirus, plant circoviruses, and chicken anaemia virus.</title>
        <authorList>
            <person name="Bassami M.R."/>
            <person name="Berryman D."/>
            <person name="Wilcox G.E."/>
            <person name="Raidal S.R."/>
        </authorList>
    </citation>
    <scope>NUCLEOTIDE SEQUENCE [GENOMIC DNA]</scope>
</reference>
<organism>
    <name type="scientific">Beak and feather disease virus</name>
    <name type="common">BFDV</name>
    <dbReference type="NCBI Taxonomy" id="77856"/>
    <lineage>
        <taxon>Viruses</taxon>
        <taxon>Monodnaviria</taxon>
        <taxon>Shotokuvirae</taxon>
        <taxon>Cressdnaviricota</taxon>
        <taxon>Arfiviricetes</taxon>
        <taxon>Cirlivirales</taxon>
        <taxon>Circoviridae</taxon>
        <taxon>Circovirus</taxon>
        <taxon>Circovirus parrot</taxon>
    </lineage>
</organism>
<name>ORF7_BFDV</name>
<dbReference type="EMBL" id="AF080560">
    <property type="protein sequence ID" value="AAC69867.1"/>
    <property type="molecule type" value="Genomic_DNA"/>
</dbReference>
<dbReference type="Proteomes" id="UP000007454">
    <property type="component" value="Genome"/>
</dbReference>
<proteinExistence type="predicted"/>
<gene>
    <name type="ORF">ORF7</name>
</gene>
<protein>
    <recommendedName>
        <fullName>Uncharacterized protein ORF7</fullName>
    </recommendedName>
</protein>
<keyword id="KW-1185">Reference proteome</keyword>
<organismHost>
    <name type="scientific">Gracula</name>
    <dbReference type="NCBI Taxonomy" id="116991"/>
</organismHost>
<organismHost>
    <name type="scientific">Psittaciformes</name>
    <dbReference type="NCBI Taxonomy" id="9223"/>
</organismHost>